<reference key="1">
    <citation type="journal article" date="2001" name="Nature">
        <title>Genome sequence of Yersinia pestis, the causative agent of plague.</title>
        <authorList>
            <person name="Parkhill J."/>
            <person name="Wren B.W."/>
            <person name="Thomson N.R."/>
            <person name="Titball R.W."/>
            <person name="Holden M.T.G."/>
            <person name="Prentice M.B."/>
            <person name="Sebaihia M."/>
            <person name="James K.D."/>
            <person name="Churcher C.M."/>
            <person name="Mungall K.L."/>
            <person name="Baker S."/>
            <person name="Basham D."/>
            <person name="Bentley S.D."/>
            <person name="Brooks K."/>
            <person name="Cerdeno-Tarraga A.-M."/>
            <person name="Chillingworth T."/>
            <person name="Cronin A."/>
            <person name="Davies R.M."/>
            <person name="Davis P."/>
            <person name="Dougan G."/>
            <person name="Feltwell T."/>
            <person name="Hamlin N."/>
            <person name="Holroyd S."/>
            <person name="Jagels K."/>
            <person name="Karlyshev A.V."/>
            <person name="Leather S."/>
            <person name="Moule S."/>
            <person name="Oyston P.C.F."/>
            <person name="Quail M.A."/>
            <person name="Rutherford K.M."/>
            <person name="Simmonds M."/>
            <person name="Skelton J."/>
            <person name="Stevens K."/>
            <person name="Whitehead S."/>
            <person name="Barrell B.G."/>
        </authorList>
    </citation>
    <scope>NUCLEOTIDE SEQUENCE [LARGE SCALE GENOMIC DNA]</scope>
    <source>
        <strain>CO-92 / Biovar Orientalis</strain>
    </source>
</reference>
<reference key="2">
    <citation type="journal article" date="2002" name="J. Bacteriol.">
        <title>Genome sequence of Yersinia pestis KIM.</title>
        <authorList>
            <person name="Deng W."/>
            <person name="Burland V."/>
            <person name="Plunkett G. III"/>
            <person name="Boutin A."/>
            <person name="Mayhew G.F."/>
            <person name="Liss P."/>
            <person name="Perna N.T."/>
            <person name="Rose D.J."/>
            <person name="Mau B."/>
            <person name="Zhou S."/>
            <person name="Schwartz D.C."/>
            <person name="Fetherston J.D."/>
            <person name="Lindler L.E."/>
            <person name="Brubaker R.R."/>
            <person name="Plano G.V."/>
            <person name="Straley S.C."/>
            <person name="McDonough K.A."/>
            <person name="Nilles M.L."/>
            <person name="Matson J.S."/>
            <person name="Blattner F.R."/>
            <person name="Perry R.D."/>
        </authorList>
    </citation>
    <scope>NUCLEOTIDE SEQUENCE [LARGE SCALE GENOMIC DNA]</scope>
    <source>
        <strain>KIM10+ / Biovar Mediaevalis</strain>
    </source>
</reference>
<reference key="3">
    <citation type="journal article" date="2004" name="DNA Res.">
        <title>Complete genome sequence of Yersinia pestis strain 91001, an isolate avirulent to humans.</title>
        <authorList>
            <person name="Song Y."/>
            <person name="Tong Z."/>
            <person name="Wang J."/>
            <person name="Wang L."/>
            <person name="Guo Z."/>
            <person name="Han Y."/>
            <person name="Zhang J."/>
            <person name="Pei D."/>
            <person name="Zhou D."/>
            <person name="Qin H."/>
            <person name="Pang X."/>
            <person name="Han Y."/>
            <person name="Zhai J."/>
            <person name="Li M."/>
            <person name="Cui B."/>
            <person name="Qi Z."/>
            <person name="Jin L."/>
            <person name="Dai R."/>
            <person name="Chen F."/>
            <person name="Li S."/>
            <person name="Ye C."/>
            <person name="Du Z."/>
            <person name="Lin W."/>
            <person name="Wang J."/>
            <person name="Yu J."/>
            <person name="Yang H."/>
            <person name="Wang J."/>
            <person name="Huang P."/>
            <person name="Yang R."/>
        </authorList>
    </citation>
    <scope>NUCLEOTIDE SEQUENCE [LARGE SCALE GENOMIC DNA]</scope>
    <source>
        <strain>91001 / Biovar Mediaevalis</strain>
    </source>
</reference>
<sequence>MKKQFIQKQQQISFVKSFFSRQLEQQLGLIEVQAPILSRVGDGTQDNLSGSEKAVQVKVKSLPDSTFEVVHSLAKWKRKTLGRFDFGADQGVYTHMKALRPDEDRLSAIHSVYVDQWDWERVMGDGERNLAYLKSTVNKIYAAIKETEAAISAEFGVKPFLPDHIQFIHSESLRARFPDLDAKGRERAIAKELGAVFLIGIGGKLADGQSHDVRAPDYDDWTSPSAEGFSGLNGDIIVWNPILEDAFEISSMGIRVDAEALKRQLALTGDEDRLELEWHQSLLRGEMPQTIGGGIGQSRLVMLLLQKQHIGQVQCGVWGPEISEKVDGLL</sequence>
<feature type="chain" id="PRO_0000195899" description="Aspartate--ammonia ligase">
    <location>
        <begin position="1"/>
        <end position="330"/>
    </location>
</feature>
<evidence type="ECO:0000255" key="1">
    <source>
        <dbReference type="HAMAP-Rule" id="MF_00555"/>
    </source>
</evidence>
<keyword id="KW-0028">Amino-acid biosynthesis</keyword>
<keyword id="KW-0061">Asparagine biosynthesis</keyword>
<keyword id="KW-0067">ATP-binding</keyword>
<keyword id="KW-0963">Cytoplasm</keyword>
<keyword id="KW-0436">Ligase</keyword>
<keyword id="KW-0547">Nucleotide-binding</keyword>
<keyword id="KW-1185">Reference proteome</keyword>
<name>ASNA_YERPE</name>
<proteinExistence type="inferred from homology"/>
<protein>
    <recommendedName>
        <fullName evidence="1">Aspartate--ammonia ligase</fullName>
        <ecNumber evidence="1">6.3.1.1</ecNumber>
    </recommendedName>
    <alternativeName>
        <fullName evidence="1">Asparagine synthetase A</fullName>
    </alternativeName>
</protein>
<comment type="catalytic activity">
    <reaction evidence="1">
        <text>L-aspartate + NH4(+) + ATP = L-asparagine + AMP + diphosphate + H(+)</text>
        <dbReference type="Rhea" id="RHEA:11372"/>
        <dbReference type="ChEBI" id="CHEBI:15378"/>
        <dbReference type="ChEBI" id="CHEBI:28938"/>
        <dbReference type="ChEBI" id="CHEBI:29991"/>
        <dbReference type="ChEBI" id="CHEBI:30616"/>
        <dbReference type="ChEBI" id="CHEBI:33019"/>
        <dbReference type="ChEBI" id="CHEBI:58048"/>
        <dbReference type="ChEBI" id="CHEBI:456215"/>
        <dbReference type="EC" id="6.3.1.1"/>
    </reaction>
</comment>
<comment type="pathway">
    <text evidence="1">Amino-acid biosynthesis; L-asparagine biosynthesis; L-asparagine from L-aspartate (ammonia route): step 1/1.</text>
</comment>
<comment type="subcellular location">
    <subcellularLocation>
        <location evidence="1">Cytoplasm</location>
    </subcellularLocation>
</comment>
<comment type="similarity">
    <text evidence="1">Belongs to the class-II aminoacyl-tRNA synthetase family. AsnA subfamily.</text>
</comment>
<dbReference type="EC" id="6.3.1.1" evidence="1"/>
<dbReference type="EMBL" id="AL590842">
    <property type="protein sequence ID" value="CAL18693.1"/>
    <property type="molecule type" value="Genomic_DNA"/>
</dbReference>
<dbReference type="EMBL" id="AE009952">
    <property type="protein sequence ID" value="AAM83599.1"/>
    <property type="molecule type" value="Genomic_DNA"/>
</dbReference>
<dbReference type="EMBL" id="AE017042">
    <property type="protein sequence ID" value="AAS60284.1"/>
    <property type="molecule type" value="Genomic_DNA"/>
</dbReference>
<dbReference type="PIR" id="AD0001">
    <property type="entry name" value="AD0001"/>
</dbReference>
<dbReference type="RefSeq" id="WP_002212256.1">
    <property type="nucleotide sequence ID" value="NZ_WUCM01000028.1"/>
</dbReference>
<dbReference type="RefSeq" id="YP_002345099.1">
    <property type="nucleotide sequence ID" value="NC_003143.1"/>
</dbReference>
<dbReference type="SMR" id="Q8ZJT3"/>
<dbReference type="STRING" id="214092.YPO0003"/>
<dbReference type="PaxDb" id="214092-YPO0003"/>
<dbReference type="DNASU" id="1144950"/>
<dbReference type="EnsemblBacteria" id="AAS60284">
    <property type="protein sequence ID" value="AAS60284"/>
    <property type="gene ID" value="YP_0003"/>
</dbReference>
<dbReference type="GeneID" id="57974591"/>
<dbReference type="KEGG" id="ype:YPO0003"/>
<dbReference type="KEGG" id="ypk:y0003"/>
<dbReference type="KEGG" id="ypm:YP_0003"/>
<dbReference type="PATRIC" id="fig|214092.21.peg.221"/>
<dbReference type="eggNOG" id="COG2502">
    <property type="taxonomic scope" value="Bacteria"/>
</dbReference>
<dbReference type="HOGENOM" id="CLU_071543_0_0_6"/>
<dbReference type="OMA" id="QSRICMF"/>
<dbReference type="OrthoDB" id="3185462at2"/>
<dbReference type="UniPathway" id="UPA00134">
    <property type="reaction ID" value="UER00194"/>
</dbReference>
<dbReference type="Proteomes" id="UP000000815">
    <property type="component" value="Chromosome"/>
</dbReference>
<dbReference type="Proteomes" id="UP000001019">
    <property type="component" value="Chromosome"/>
</dbReference>
<dbReference type="Proteomes" id="UP000002490">
    <property type="component" value="Chromosome"/>
</dbReference>
<dbReference type="GO" id="GO:0005829">
    <property type="term" value="C:cytosol"/>
    <property type="evidence" value="ECO:0000318"/>
    <property type="project" value="GO_Central"/>
</dbReference>
<dbReference type="GO" id="GO:0004071">
    <property type="term" value="F:aspartate-ammonia ligase activity"/>
    <property type="evidence" value="ECO:0000318"/>
    <property type="project" value="GO_Central"/>
</dbReference>
<dbReference type="GO" id="GO:0005524">
    <property type="term" value="F:ATP binding"/>
    <property type="evidence" value="ECO:0007669"/>
    <property type="project" value="UniProtKB-UniRule"/>
</dbReference>
<dbReference type="GO" id="GO:0006529">
    <property type="term" value="P:asparagine biosynthetic process"/>
    <property type="evidence" value="ECO:0000318"/>
    <property type="project" value="GO_Central"/>
</dbReference>
<dbReference type="GO" id="GO:0070981">
    <property type="term" value="P:L-asparagine biosynthetic process"/>
    <property type="evidence" value="ECO:0007669"/>
    <property type="project" value="UniProtKB-UniRule"/>
</dbReference>
<dbReference type="Gene3D" id="3.30.930.10">
    <property type="entry name" value="Bira Bifunctional Protein, Domain 2"/>
    <property type="match status" value="1"/>
</dbReference>
<dbReference type="HAMAP" id="MF_00555">
    <property type="entry name" value="AsnA"/>
    <property type="match status" value="1"/>
</dbReference>
<dbReference type="InterPro" id="IPR006195">
    <property type="entry name" value="aa-tRNA-synth_II"/>
</dbReference>
<dbReference type="InterPro" id="IPR045864">
    <property type="entry name" value="aa-tRNA-synth_II/BPL/LPL"/>
</dbReference>
<dbReference type="InterPro" id="IPR004618">
    <property type="entry name" value="AsnA"/>
</dbReference>
<dbReference type="NCBIfam" id="TIGR00669">
    <property type="entry name" value="asnA"/>
    <property type="match status" value="1"/>
</dbReference>
<dbReference type="PANTHER" id="PTHR30073">
    <property type="entry name" value="ASPARTATE--AMMONIA LIGASE"/>
    <property type="match status" value="1"/>
</dbReference>
<dbReference type="PANTHER" id="PTHR30073:SF5">
    <property type="entry name" value="ASPARTATE--AMMONIA LIGASE"/>
    <property type="match status" value="1"/>
</dbReference>
<dbReference type="Pfam" id="PF03590">
    <property type="entry name" value="AsnA"/>
    <property type="match status" value="1"/>
</dbReference>
<dbReference type="PIRSF" id="PIRSF001555">
    <property type="entry name" value="Asp_ammon_ligase"/>
    <property type="match status" value="1"/>
</dbReference>
<dbReference type="SUPFAM" id="SSF55681">
    <property type="entry name" value="Class II aaRS and biotin synthetases"/>
    <property type="match status" value="1"/>
</dbReference>
<dbReference type="PROSITE" id="PS50862">
    <property type="entry name" value="AA_TRNA_LIGASE_II"/>
    <property type="match status" value="1"/>
</dbReference>
<accession>Q8ZJT3</accession>
<accession>Q0WKT9</accession>
<gene>
    <name evidence="1" type="primary">asnA</name>
    <name type="ordered locus">YPO0003</name>
    <name type="ordered locus">y0003</name>
    <name type="ordered locus">YP_0003</name>
</gene>
<organism>
    <name type="scientific">Yersinia pestis</name>
    <dbReference type="NCBI Taxonomy" id="632"/>
    <lineage>
        <taxon>Bacteria</taxon>
        <taxon>Pseudomonadati</taxon>
        <taxon>Pseudomonadota</taxon>
        <taxon>Gammaproteobacteria</taxon>
        <taxon>Enterobacterales</taxon>
        <taxon>Yersiniaceae</taxon>
        <taxon>Yersinia</taxon>
    </lineage>
</organism>